<accession>Q9LLT1</accession>
<accession>P81825</accession>
<accession>Q9LLT2</accession>
<comment type="function">
    <text evidence="1">Has pectate lyase activity.</text>
</comment>
<comment type="catalytic activity">
    <reaction>
        <text>Eliminative cleavage of (1-&gt;4)-alpha-D-galacturonan to give oligosaccharides with 4-deoxy-alpha-D-galact-4-enuronosyl groups at their non-reducing ends.</text>
        <dbReference type="EC" id="4.2.2.2"/>
    </reaction>
</comment>
<comment type="cofactor">
    <cofactor evidence="1">
        <name>Ca(2+)</name>
        <dbReference type="ChEBI" id="CHEBI:29108"/>
    </cofactor>
    <text evidence="1">Binds 1 Ca(2+) ion.</text>
</comment>
<comment type="pathway">
    <text>Glycan metabolism; pectin degradation; 2-dehydro-3-deoxy-D-gluconate from pectin: step 2/5.</text>
</comment>
<comment type="allergen">
    <text evidence="3">Causes an allergic reaction in human. Binds to IgE of patients who are allergic to J.ashei.</text>
</comment>
<comment type="similarity">
    <text evidence="4">Belongs to the polysaccharide lyase 1 family. Amb a subfamily.</text>
</comment>
<organism>
    <name type="scientific">Juniperus virginiana</name>
    <name type="common">Eastern redcedar</name>
    <name type="synonym">Sabina virginiana</name>
    <dbReference type="NCBI Taxonomy" id="39584"/>
    <lineage>
        <taxon>Eukaryota</taxon>
        <taxon>Viridiplantae</taxon>
        <taxon>Streptophyta</taxon>
        <taxon>Embryophyta</taxon>
        <taxon>Tracheophyta</taxon>
        <taxon>Spermatophyta</taxon>
        <taxon>Pinopsida</taxon>
        <taxon>Pinidae</taxon>
        <taxon>Conifers II</taxon>
        <taxon>Cupressales</taxon>
        <taxon>Cupressaceae</taxon>
        <taxon>Juniperus</taxon>
    </lineage>
</organism>
<feature type="signal peptide" evidence="3">
    <location>
        <begin position="1"/>
        <end position="21"/>
    </location>
</feature>
<feature type="chain" id="PRO_0000024909" description="Pectate lyase 1">
    <location>
        <begin position="22"/>
        <end position="367"/>
    </location>
</feature>
<feature type="active site" evidence="2">
    <location>
        <position position="250"/>
    </location>
</feature>
<feature type="binding site" evidence="1">
    <location>
        <position position="170"/>
    </location>
    <ligand>
        <name>Ca(2+)</name>
        <dbReference type="ChEBI" id="CHEBI:29108"/>
    </ligand>
</feature>
<feature type="binding site" evidence="1">
    <location>
        <position position="194"/>
    </location>
    <ligand>
        <name>Ca(2+)</name>
        <dbReference type="ChEBI" id="CHEBI:29108"/>
    </ligand>
</feature>
<feature type="binding site" evidence="1">
    <location>
        <position position="198"/>
    </location>
    <ligand>
        <name>Ca(2+)</name>
        <dbReference type="ChEBI" id="CHEBI:29108"/>
    </ligand>
</feature>
<feature type="glycosylation site" description="N-linked (GlcNAc...) asparagine" evidence="2">
    <location>
        <position position="148"/>
    </location>
</feature>
<feature type="glycosylation site" description="N-linked (GlcNAc...) asparagine" evidence="2">
    <location>
        <position position="178"/>
    </location>
</feature>
<feature type="disulfide bond" evidence="1">
    <location>
        <begin position="28"/>
        <end position="45"/>
    </location>
</feature>
<feature type="disulfide bond" evidence="1">
    <location>
        <begin position="128"/>
        <end position="147"/>
    </location>
</feature>
<feature type="disulfide bond" evidence="1">
    <location>
        <begin position="306"/>
        <end position="312"/>
    </location>
</feature>
<feature type="sequence variant" evidence="3">
    <original>S</original>
    <variation>F</variation>
    <location>
        <position position="209"/>
    </location>
</feature>
<dbReference type="EC" id="4.2.2.2"/>
<dbReference type="EMBL" id="AF151427">
    <property type="protein sequence ID" value="AAF80164.1"/>
    <property type="molecule type" value="mRNA"/>
</dbReference>
<dbReference type="EMBL" id="AF151429">
    <property type="protein sequence ID" value="AAF80166.1"/>
    <property type="molecule type" value="mRNA"/>
</dbReference>
<dbReference type="SMR" id="Q9LLT1"/>
<dbReference type="Allergome" id="3342">
    <property type="allergen name" value="Jun v 1.0101"/>
</dbReference>
<dbReference type="Allergome" id="3343">
    <property type="allergen name" value="Jun v 1.0102"/>
</dbReference>
<dbReference type="Allergome" id="431">
    <property type="allergen name" value="Jun v 1"/>
</dbReference>
<dbReference type="CAZy" id="PL1">
    <property type="family name" value="Polysaccharide Lyase Family 1"/>
</dbReference>
<dbReference type="UniPathway" id="UPA00545">
    <property type="reaction ID" value="UER00824"/>
</dbReference>
<dbReference type="GO" id="GO:0046872">
    <property type="term" value="F:metal ion binding"/>
    <property type="evidence" value="ECO:0007669"/>
    <property type="project" value="UniProtKB-KW"/>
</dbReference>
<dbReference type="GO" id="GO:0030570">
    <property type="term" value="F:pectate lyase activity"/>
    <property type="evidence" value="ECO:0007669"/>
    <property type="project" value="UniProtKB-EC"/>
</dbReference>
<dbReference type="GO" id="GO:0045490">
    <property type="term" value="P:pectin catabolic process"/>
    <property type="evidence" value="ECO:0007669"/>
    <property type="project" value="UniProtKB-UniPathway"/>
</dbReference>
<dbReference type="Gene3D" id="2.160.20.10">
    <property type="entry name" value="Single-stranded right-handed beta-helix, Pectin lyase-like"/>
    <property type="match status" value="1"/>
</dbReference>
<dbReference type="InterPro" id="IPR018082">
    <property type="entry name" value="AmbAllergen"/>
</dbReference>
<dbReference type="InterPro" id="IPR002022">
    <property type="entry name" value="Pec_lyase"/>
</dbReference>
<dbReference type="InterPro" id="IPR012334">
    <property type="entry name" value="Pectin_lyas_fold"/>
</dbReference>
<dbReference type="InterPro" id="IPR011050">
    <property type="entry name" value="Pectin_lyase_fold/virulence"/>
</dbReference>
<dbReference type="InterPro" id="IPR045032">
    <property type="entry name" value="PEL"/>
</dbReference>
<dbReference type="PANTHER" id="PTHR31683:SF80">
    <property type="entry name" value="PECTATE LYASE 16-RELATED"/>
    <property type="match status" value="1"/>
</dbReference>
<dbReference type="PANTHER" id="PTHR31683">
    <property type="entry name" value="PECTATE LYASE 18-RELATED"/>
    <property type="match status" value="1"/>
</dbReference>
<dbReference type="Pfam" id="PF00544">
    <property type="entry name" value="Pectate_lyase_4"/>
    <property type="match status" value="1"/>
</dbReference>
<dbReference type="PRINTS" id="PR00807">
    <property type="entry name" value="AMBALLERGEN"/>
</dbReference>
<dbReference type="SMART" id="SM00656">
    <property type="entry name" value="Amb_all"/>
    <property type="match status" value="1"/>
</dbReference>
<dbReference type="SUPFAM" id="SSF51126">
    <property type="entry name" value="Pectin lyase-like"/>
    <property type="match status" value="1"/>
</dbReference>
<evidence type="ECO:0000250" key="1"/>
<evidence type="ECO:0000255" key="2"/>
<evidence type="ECO:0000269" key="3">
    <source>
    </source>
</evidence>
<evidence type="ECO:0000305" key="4"/>
<evidence type="ECO:0000312" key="5">
    <source>
        <dbReference type="EMBL" id="AAF80166.1"/>
    </source>
</evidence>
<proteinExistence type="evidence at protein level"/>
<name>PLY1_JUNVI</name>
<keyword id="KW-0020">Allergen</keyword>
<keyword id="KW-0106">Calcium</keyword>
<keyword id="KW-0903">Direct protein sequencing</keyword>
<keyword id="KW-1015">Disulfide bond</keyword>
<keyword id="KW-0325">Glycoprotein</keyword>
<keyword id="KW-0456">Lyase</keyword>
<keyword id="KW-0479">Metal-binding</keyword>
<keyword id="KW-0732">Signal</keyword>
<sequence>MASPCLIAFLVFLCAIVSCCSDNPIDSCWRGDSNWGQNRMKLADCAVGFGSSTMGGKGGDFYTVTSADDNPVNPTPGTLRYGATREKTLWIIFSQNMNIKLKMPLYVAGHKTIDGRGADVHLGNGGPCLFMRKVSHVILHGLHIHGCNTSVLGDVLVSESIGVVPVHAQDGDAITMRNVTNAWIDHNSLSDCSDGLIDVTLGSTGITISNNHFFNHHKVMLLGHDDTYDDDKSMKVTVAFNQFGPNAGQRMPRARYGLVHVANNNYDPWNIYAIGGSSNPTILSEGNSFTAPNENYKKEVTKRIGCESTSACANWVWRSTRDAFSNGAYFVSSGKIEETNIYNSNEAFKVENGNAAPQLTKNAGVVA</sequence>
<protein>
    <recommendedName>
        <fullName>Pectate lyase 1</fullName>
        <ecNumber>4.2.2.2</ecNumber>
    </recommendedName>
    <alternativeName>
        <fullName>Major pollen allergen Jun v 1</fullName>
    </alternativeName>
    <allergenName>Jun v 1</allergenName>
</protein>
<reference evidence="4 5" key="1">
    <citation type="journal article" date="2001" name="Clin. Exp. Allergy">
        <title>Identification of mutations in the genes for the pollen allergens of eastern red cedar (Juniperus virginiana).</title>
        <authorList>
            <person name="Midoro-Horiuti T."/>
            <person name="Goldblum R.M."/>
            <person name="Brooks E.G."/>
        </authorList>
    </citation>
    <scope>NUCLEOTIDE SEQUENCE [MRNA]</scope>
    <scope>PROTEIN SEQUENCE OF 22-26</scope>
    <scope>VARIANT PHE-209</scope>
    <scope>ALLERGEN</scope>
    <source>
        <tissue evidence="3">Pollen</tissue>
    </source>
</reference>